<evidence type="ECO:0000250" key="1">
    <source>
        <dbReference type="UniProtKB" id="P10175"/>
    </source>
</evidence>
<evidence type="ECO:0000250" key="2">
    <source>
        <dbReference type="UniProtKB" id="P10176"/>
    </source>
</evidence>
<evidence type="ECO:0000305" key="3"/>
<organism>
    <name type="scientific">Carlito syrichta</name>
    <name type="common">Philippine tarsier</name>
    <name type="synonym">Tarsius syrichta</name>
    <dbReference type="NCBI Taxonomy" id="1868482"/>
    <lineage>
        <taxon>Eukaryota</taxon>
        <taxon>Metazoa</taxon>
        <taxon>Chordata</taxon>
        <taxon>Craniata</taxon>
        <taxon>Vertebrata</taxon>
        <taxon>Euteleostomi</taxon>
        <taxon>Mammalia</taxon>
        <taxon>Eutheria</taxon>
        <taxon>Euarchontoglires</taxon>
        <taxon>Primates</taxon>
        <taxon>Haplorrhini</taxon>
        <taxon>Tarsiiformes</taxon>
        <taxon>Tarsiidae</taxon>
        <taxon>Carlito</taxon>
    </lineage>
</organism>
<dbReference type="EMBL" id="AY254822">
    <property type="protein sequence ID" value="AAP32253.1"/>
    <property type="molecule type" value="mRNA"/>
</dbReference>
<dbReference type="SMR" id="Q863G4"/>
<dbReference type="STRING" id="1868482.ENSTSYP00000025075"/>
<dbReference type="Ensembl" id="ENSTSYT00000044429">
    <property type="protein sequence ID" value="ENSTSYP00000025075"/>
    <property type="gene ID" value="ENSTSYG00000035241"/>
</dbReference>
<dbReference type="OMA" id="AQVHSMP"/>
<dbReference type="OrthoDB" id="8931496at2759"/>
<dbReference type="UniPathway" id="UPA00705"/>
<dbReference type="Proteomes" id="UP000189704">
    <property type="component" value="Unplaced"/>
</dbReference>
<dbReference type="GO" id="GO:0005743">
    <property type="term" value="C:mitochondrial inner membrane"/>
    <property type="evidence" value="ECO:0007669"/>
    <property type="project" value="UniProtKB-SubCell"/>
</dbReference>
<dbReference type="GO" id="GO:0045277">
    <property type="term" value="C:respiratory chain complex IV"/>
    <property type="evidence" value="ECO:0007669"/>
    <property type="project" value="InterPro"/>
</dbReference>
<dbReference type="GO" id="GO:0006123">
    <property type="term" value="P:mitochondrial electron transport, cytochrome c to oxygen"/>
    <property type="evidence" value="ECO:0007669"/>
    <property type="project" value="InterPro"/>
</dbReference>
<dbReference type="CDD" id="cd00930">
    <property type="entry name" value="Cyt_c_Oxidase_VIII"/>
    <property type="match status" value="1"/>
</dbReference>
<dbReference type="FunFam" id="4.10.81.10:FF:000001">
    <property type="entry name" value="Cytochrome c oxidase subunit 8B, mitochondrial"/>
    <property type="match status" value="1"/>
</dbReference>
<dbReference type="Gene3D" id="4.10.81.10">
    <property type="entry name" value="Cytochrome c oxidase, subunit 8"/>
    <property type="match status" value="1"/>
</dbReference>
<dbReference type="InterPro" id="IPR003205">
    <property type="entry name" value="Cyt_c_oxidase_su8"/>
</dbReference>
<dbReference type="InterPro" id="IPR036548">
    <property type="entry name" value="Cyt_c_oxidase_su8_sf"/>
</dbReference>
<dbReference type="PANTHER" id="PTHR16717">
    <property type="entry name" value="CYTOCHROME C OXIDASE POLYPEPTIDE VIII"/>
    <property type="match status" value="1"/>
</dbReference>
<dbReference type="PANTHER" id="PTHR16717:SF1">
    <property type="entry name" value="CYTOCHROME C OXIDASE SUBUNIT 8A, MITOCHONDRIAL"/>
    <property type="match status" value="1"/>
</dbReference>
<dbReference type="Pfam" id="PF02285">
    <property type="entry name" value="COX8"/>
    <property type="match status" value="1"/>
</dbReference>
<dbReference type="SUPFAM" id="SSF81431">
    <property type="entry name" value="Mitochondrial cytochrome c oxidase subunit VIIIb (aka IX)"/>
    <property type="match status" value="1"/>
</dbReference>
<proteinExistence type="inferred from homology"/>
<name>COX8A_CARSF</name>
<protein>
    <recommendedName>
        <fullName>Cytochrome c oxidase subunit 8A, mitochondrial</fullName>
    </recommendedName>
    <alternativeName>
        <fullName>Cytochrome c oxidase polypeptide VIII-liver</fullName>
    </alternativeName>
    <alternativeName>
        <fullName>Cytochrome c oxidase subunit 8-2</fullName>
    </alternativeName>
</protein>
<gene>
    <name type="primary">COX8A</name>
    <name type="synonym">COX8</name>
    <name type="synonym">COX8L</name>
</gene>
<comment type="function">
    <text evidence="1">Component of the cytochrome c oxidase, the last enzyme in the mitochondrial electron transport chain which drives oxidative phosphorylation. The respiratory chain contains 3 multisubunit complexes succinate dehydrogenase (complex II, CII), ubiquinol-cytochrome c oxidoreductase (cytochrome b-c1 complex, complex III, CIII) and cytochrome c oxidase (complex IV, CIV), that cooperate to transfer electrons derived from NADH and succinate to molecular oxygen, creating an electrochemical gradient over the inner membrane that drives transmembrane transport and the ATP synthase. Cytochrome c oxidase is the component of the respiratory chain that catalyzes the reduction of oxygen to water. Electrons originating from reduced cytochrome c in the intermembrane space (IMS) are transferred via the dinuclear copper A center (CU(A)) of subunit 2 and heme A of subunit 1 to the active site in subunit 1, a binuclear center (BNC) formed by heme A3 and copper B (CU(B)). The BNC reduces molecular oxygen to 2 water molecules using 4 electrons from cytochrome c in the IMS and 4 protons from the mitochondrial matrix.</text>
</comment>
<comment type="pathway">
    <text evidence="1">Energy metabolism; oxidative phosphorylation.</text>
</comment>
<comment type="subunit">
    <text evidence="2">Component of the cytochrome c oxidase (complex IV, CIV), a multisubunit enzyme composed of 14 subunits. The complex is composed of a catalytic core of 3 subunits MT-CO1, MT-CO2 and MT-CO3, encoded in the mitochondrial DNA, and 11 supernumerary subunits COX4I, COX5A, COX5B, COX6A, COX6B, COX6C, COX7A, COX7B, COX7C, COX8 and NDUFA4, which are encoded in the nuclear genome. The complex exists as a monomer or a dimer and forms supercomplexes (SCs) in the inner mitochondrial membrane with NADH-ubiquinone oxidoreductase (complex I, CI) and ubiquinol-cytochrome c oxidoreductase (cytochrome b-c1 complex, complex III, CIII), resulting in different assemblies (supercomplex SCI(1)III(2)IV(1) and megacomplex MCI(2)III(2)IV(2)).</text>
</comment>
<comment type="subcellular location">
    <subcellularLocation>
        <location evidence="2">Mitochondrion inner membrane</location>
        <topology evidence="2">Single-pass membrane protein</topology>
    </subcellularLocation>
</comment>
<comment type="PTM">
    <text evidence="2">In response to mitochondrial stress, the precursor protein is ubiquitinated by the SIFI complex in the cytoplasm before mitochondrial import, leading to its degradation. Within the SIFI complex, UBR4 initiates ubiquitin chain that are further elongated or branched by KCMF1.</text>
</comment>
<comment type="similarity">
    <text evidence="3">Belongs to the cytochrome c oxidase VIII family.</text>
</comment>
<reference key="1">
    <citation type="journal article" date="2003" name="Proc. Natl. Acad. Sci. U.S.A.">
        <title>Adaptive evolution of cytochrome c oxidase subunit VIII in anthropoid primates.</title>
        <authorList>
            <person name="Goldberg A."/>
            <person name="Wildman D.E."/>
            <person name="Schmidt T.R."/>
            <person name="Huttemann M."/>
            <person name="Goodman M."/>
            <person name="Weiss M.L."/>
            <person name="Grossman L.I."/>
        </authorList>
    </citation>
    <scope>NUCLEOTIDE SEQUENCE [MRNA]</scope>
</reference>
<sequence length="69" mass="7628">MSVLTPLLLRGLAGSARRLPVPRAQIHSKPPREQLGTMDVAIGITSCFLCFLLPAGWVLSHLESYKKRE</sequence>
<keyword id="KW-0472">Membrane</keyword>
<keyword id="KW-0496">Mitochondrion</keyword>
<keyword id="KW-0999">Mitochondrion inner membrane</keyword>
<keyword id="KW-1185">Reference proteome</keyword>
<keyword id="KW-0809">Transit peptide</keyword>
<keyword id="KW-0812">Transmembrane</keyword>
<keyword id="KW-1133">Transmembrane helix</keyword>
<keyword id="KW-0832">Ubl conjugation</keyword>
<feature type="transit peptide" description="Mitochondrion" evidence="2">
    <location>
        <begin position="1"/>
        <end position="25"/>
    </location>
</feature>
<feature type="chain" id="PRO_0000006197" description="Cytochrome c oxidase subunit 8A, mitochondrial">
    <location>
        <begin position="26"/>
        <end position="69"/>
    </location>
</feature>
<feature type="topological domain" description="Mitochondrial matrix" evidence="2">
    <location>
        <begin position="26"/>
        <end position="36"/>
    </location>
</feature>
<feature type="transmembrane region" description="Helical" evidence="1">
    <location>
        <begin position="37"/>
        <end position="60"/>
    </location>
</feature>
<feature type="topological domain" description="Mitochondrial intermembrane" evidence="2">
    <location>
        <begin position="61"/>
        <end position="69"/>
    </location>
</feature>
<feature type="short sequence motif" description="SIFI-degron" evidence="2">
    <location>
        <begin position="2"/>
        <end position="19"/>
    </location>
</feature>
<accession>Q863G4</accession>